<feature type="chain" id="PRO_1000145098" description="Urease accessory protein UreD">
    <location>
        <begin position="1"/>
        <end position="279"/>
    </location>
</feature>
<organism>
    <name type="scientific">Streptococcus thermophilus (strain CNRZ 1066)</name>
    <dbReference type="NCBI Taxonomy" id="299768"/>
    <lineage>
        <taxon>Bacteria</taxon>
        <taxon>Bacillati</taxon>
        <taxon>Bacillota</taxon>
        <taxon>Bacilli</taxon>
        <taxon>Lactobacillales</taxon>
        <taxon>Streptococcaceae</taxon>
        <taxon>Streptococcus</taxon>
    </lineage>
</organism>
<gene>
    <name evidence="1" type="primary">ureD</name>
    <name type="ordered locus">str0287</name>
</gene>
<comment type="function">
    <text evidence="1">Required for maturation of urease via the functional incorporation of the urease nickel metallocenter.</text>
</comment>
<comment type="subunit">
    <text evidence="1">UreD, UreF and UreG form a complex that acts as a GTP-hydrolysis-dependent molecular chaperone, activating the urease apoprotein by helping to assemble the nickel containing metallocenter of UreC. The UreE protein probably delivers the nickel.</text>
</comment>
<comment type="subcellular location">
    <subcellularLocation>
        <location evidence="1">Cytoplasm</location>
    </subcellularLocation>
</comment>
<comment type="similarity">
    <text evidence="1">Belongs to the UreD family.</text>
</comment>
<evidence type="ECO:0000255" key="1">
    <source>
        <dbReference type="HAMAP-Rule" id="MF_01384"/>
    </source>
</evidence>
<keyword id="KW-0143">Chaperone</keyword>
<keyword id="KW-0963">Cytoplasm</keyword>
<keyword id="KW-0996">Nickel insertion</keyword>
<name>URED_STRT1</name>
<sequence length="279" mass="32312">MTQVYDGFVHLGFSNRNGRTISHKKYQEGNSRVSADNSDANGVPYYFLINMGGGFVEGEQYQVTIDVNKDAHALVTTQTPTYVYKCEKGQLTQQNTSITLEENSYLEYMADEVIPYLKSRYFQTSRIDMDKSAHLIYSDGVTAGWSHEDLPFQYHYFRNLTQIYQDNELVYSDQTLLEPEKQDMFKLGYFEGWRNYNSLVMVSPNIDETFVKALQKHLEGLNLESDFAISSLDISGLVLRILGRTAEDNRRIIYSCADYFRQEIHGLTPLNLRKNDMRR</sequence>
<reference key="1">
    <citation type="journal article" date="2004" name="Nat. Biotechnol.">
        <title>Complete sequence and comparative genome analysis of the dairy bacterium Streptococcus thermophilus.</title>
        <authorList>
            <person name="Bolotin A."/>
            <person name="Quinquis B."/>
            <person name="Renault P."/>
            <person name="Sorokin A."/>
            <person name="Ehrlich S.D."/>
            <person name="Kulakauskas S."/>
            <person name="Lapidus A."/>
            <person name="Goltsman E."/>
            <person name="Mazur M."/>
            <person name="Pusch G.D."/>
            <person name="Fonstein M."/>
            <person name="Overbeek R."/>
            <person name="Kyprides N."/>
            <person name="Purnelle B."/>
            <person name="Prozzi D."/>
            <person name="Ngui K."/>
            <person name="Masuy D."/>
            <person name="Hancy F."/>
            <person name="Burteau S."/>
            <person name="Boutry M."/>
            <person name="Delcour J."/>
            <person name="Goffeau A."/>
            <person name="Hols P."/>
        </authorList>
    </citation>
    <scope>NUCLEOTIDE SEQUENCE [LARGE SCALE GENOMIC DNA]</scope>
    <source>
        <strain>CNRZ 1066</strain>
    </source>
</reference>
<protein>
    <recommendedName>
        <fullName evidence="1">Urease accessory protein UreD</fullName>
    </recommendedName>
</protein>
<proteinExistence type="inferred from homology"/>
<accession>Q5M1G2</accession>
<dbReference type="EMBL" id="CP000024">
    <property type="protein sequence ID" value="AAV61899.1"/>
    <property type="molecule type" value="Genomic_DNA"/>
</dbReference>
<dbReference type="RefSeq" id="WP_011226862.1">
    <property type="nucleotide sequence ID" value="NC_006449.1"/>
</dbReference>
<dbReference type="SMR" id="Q5M1G2"/>
<dbReference type="KEGG" id="stc:str0287"/>
<dbReference type="HOGENOM" id="CLU_056339_5_0_9"/>
<dbReference type="GO" id="GO:0005737">
    <property type="term" value="C:cytoplasm"/>
    <property type="evidence" value="ECO:0007669"/>
    <property type="project" value="UniProtKB-SubCell"/>
</dbReference>
<dbReference type="GO" id="GO:0016151">
    <property type="term" value="F:nickel cation binding"/>
    <property type="evidence" value="ECO:0007669"/>
    <property type="project" value="UniProtKB-UniRule"/>
</dbReference>
<dbReference type="HAMAP" id="MF_01384">
    <property type="entry name" value="UreD"/>
    <property type="match status" value="1"/>
</dbReference>
<dbReference type="InterPro" id="IPR002669">
    <property type="entry name" value="UreD"/>
</dbReference>
<dbReference type="PANTHER" id="PTHR33643">
    <property type="entry name" value="UREASE ACCESSORY PROTEIN D"/>
    <property type="match status" value="1"/>
</dbReference>
<dbReference type="PANTHER" id="PTHR33643:SF1">
    <property type="entry name" value="UREASE ACCESSORY PROTEIN D"/>
    <property type="match status" value="1"/>
</dbReference>
<dbReference type="Pfam" id="PF01774">
    <property type="entry name" value="UreD"/>
    <property type="match status" value="1"/>
</dbReference>